<protein>
    <recommendedName>
        <fullName evidence="1">Probable endonuclease 4</fullName>
        <ecNumber evidence="1">3.1.21.2</ecNumber>
    </recommendedName>
    <alternativeName>
        <fullName evidence="1">Endodeoxyribonuclease IV</fullName>
    </alternativeName>
    <alternativeName>
        <fullName evidence="1">Endonuclease IV</fullName>
    </alternativeName>
</protein>
<proteinExistence type="inferred from homology"/>
<comment type="function">
    <text evidence="1">Endonuclease IV plays a role in DNA repair. It cleaves phosphodiester bonds at apurinic or apyrimidinic (AP) sites, generating a 3'-hydroxyl group and a 5'-terminal sugar phosphate.</text>
</comment>
<comment type="catalytic activity">
    <reaction evidence="1">
        <text>Endonucleolytic cleavage to 5'-phosphooligonucleotide end-products.</text>
        <dbReference type="EC" id="3.1.21.2"/>
    </reaction>
</comment>
<comment type="cofactor">
    <cofactor evidence="1">
        <name>Zn(2+)</name>
        <dbReference type="ChEBI" id="CHEBI:29105"/>
    </cofactor>
    <text evidence="1">Binds 3 Zn(2+) ions.</text>
</comment>
<comment type="similarity">
    <text evidence="1">Belongs to the AP endonuclease 2 family.</text>
</comment>
<dbReference type="EC" id="3.1.21.2" evidence="1"/>
<dbReference type="EMBL" id="CR848038">
    <property type="protein sequence ID" value="CAH63470.1"/>
    <property type="molecule type" value="Genomic_DNA"/>
</dbReference>
<dbReference type="RefSeq" id="WP_011096765.1">
    <property type="nucleotide sequence ID" value="NC_004552.2"/>
</dbReference>
<dbReference type="SMR" id="Q5L798"/>
<dbReference type="GeneID" id="93024552"/>
<dbReference type="KEGG" id="cab:CAB012"/>
<dbReference type="eggNOG" id="COG0648">
    <property type="taxonomic scope" value="Bacteria"/>
</dbReference>
<dbReference type="HOGENOM" id="CLU_025885_0_1_0"/>
<dbReference type="OrthoDB" id="9805666at2"/>
<dbReference type="Proteomes" id="UP000001012">
    <property type="component" value="Chromosome"/>
</dbReference>
<dbReference type="GO" id="GO:0008833">
    <property type="term" value="F:deoxyribonuclease IV (phage-T4-induced) activity"/>
    <property type="evidence" value="ECO:0007669"/>
    <property type="project" value="UniProtKB-UniRule"/>
</dbReference>
<dbReference type="GO" id="GO:0003677">
    <property type="term" value="F:DNA binding"/>
    <property type="evidence" value="ECO:0007669"/>
    <property type="project" value="InterPro"/>
</dbReference>
<dbReference type="GO" id="GO:0003906">
    <property type="term" value="F:DNA-(apurinic or apyrimidinic site) endonuclease activity"/>
    <property type="evidence" value="ECO:0007669"/>
    <property type="project" value="TreeGrafter"/>
</dbReference>
<dbReference type="GO" id="GO:0008081">
    <property type="term" value="F:phosphoric diester hydrolase activity"/>
    <property type="evidence" value="ECO:0007669"/>
    <property type="project" value="TreeGrafter"/>
</dbReference>
<dbReference type="GO" id="GO:0008270">
    <property type="term" value="F:zinc ion binding"/>
    <property type="evidence" value="ECO:0007669"/>
    <property type="project" value="UniProtKB-UniRule"/>
</dbReference>
<dbReference type="GO" id="GO:0006284">
    <property type="term" value="P:base-excision repair"/>
    <property type="evidence" value="ECO:0007669"/>
    <property type="project" value="TreeGrafter"/>
</dbReference>
<dbReference type="CDD" id="cd00019">
    <property type="entry name" value="AP2Ec"/>
    <property type="match status" value="1"/>
</dbReference>
<dbReference type="FunFam" id="3.20.20.150:FF:000001">
    <property type="entry name" value="Probable endonuclease 4"/>
    <property type="match status" value="1"/>
</dbReference>
<dbReference type="Gene3D" id="3.20.20.150">
    <property type="entry name" value="Divalent-metal-dependent TIM barrel enzymes"/>
    <property type="match status" value="1"/>
</dbReference>
<dbReference type="HAMAP" id="MF_00152">
    <property type="entry name" value="Nfo"/>
    <property type="match status" value="1"/>
</dbReference>
<dbReference type="InterPro" id="IPR001719">
    <property type="entry name" value="AP_endonuc_2"/>
</dbReference>
<dbReference type="InterPro" id="IPR018246">
    <property type="entry name" value="AP_endonuc_F2_Zn_BS"/>
</dbReference>
<dbReference type="InterPro" id="IPR036237">
    <property type="entry name" value="Xyl_isomerase-like_sf"/>
</dbReference>
<dbReference type="InterPro" id="IPR013022">
    <property type="entry name" value="Xyl_isomerase-like_TIM-brl"/>
</dbReference>
<dbReference type="NCBIfam" id="TIGR00587">
    <property type="entry name" value="nfo"/>
    <property type="match status" value="1"/>
</dbReference>
<dbReference type="NCBIfam" id="NF002197">
    <property type="entry name" value="PRK01060.1-2"/>
    <property type="match status" value="1"/>
</dbReference>
<dbReference type="PANTHER" id="PTHR21445:SF0">
    <property type="entry name" value="APURINIC-APYRIMIDINIC ENDONUCLEASE"/>
    <property type="match status" value="1"/>
</dbReference>
<dbReference type="PANTHER" id="PTHR21445">
    <property type="entry name" value="ENDONUCLEASE IV ENDODEOXYRIBONUCLEASE IV"/>
    <property type="match status" value="1"/>
</dbReference>
<dbReference type="Pfam" id="PF01261">
    <property type="entry name" value="AP_endonuc_2"/>
    <property type="match status" value="1"/>
</dbReference>
<dbReference type="SMART" id="SM00518">
    <property type="entry name" value="AP2Ec"/>
    <property type="match status" value="1"/>
</dbReference>
<dbReference type="SUPFAM" id="SSF51658">
    <property type="entry name" value="Xylose isomerase-like"/>
    <property type="match status" value="1"/>
</dbReference>
<dbReference type="PROSITE" id="PS00729">
    <property type="entry name" value="AP_NUCLEASE_F2_1"/>
    <property type="match status" value="1"/>
</dbReference>
<dbReference type="PROSITE" id="PS00730">
    <property type="entry name" value="AP_NUCLEASE_F2_2"/>
    <property type="match status" value="1"/>
</dbReference>
<dbReference type="PROSITE" id="PS00731">
    <property type="entry name" value="AP_NUCLEASE_F2_3"/>
    <property type="match status" value="1"/>
</dbReference>
<dbReference type="PROSITE" id="PS51432">
    <property type="entry name" value="AP_NUCLEASE_F2_4"/>
    <property type="match status" value="1"/>
</dbReference>
<keyword id="KW-0227">DNA damage</keyword>
<keyword id="KW-0234">DNA repair</keyword>
<keyword id="KW-0255">Endonuclease</keyword>
<keyword id="KW-0378">Hydrolase</keyword>
<keyword id="KW-0479">Metal-binding</keyword>
<keyword id="KW-0540">Nuclease</keyword>
<keyword id="KW-0862">Zinc</keyword>
<evidence type="ECO:0000255" key="1">
    <source>
        <dbReference type="HAMAP-Rule" id="MF_00152"/>
    </source>
</evidence>
<feature type="chain" id="PRO_1000011297" description="Probable endonuclease 4">
    <location>
        <begin position="1"/>
        <end position="289"/>
    </location>
</feature>
<feature type="binding site" evidence="1">
    <location>
        <position position="75"/>
    </location>
    <ligand>
        <name>Zn(2+)</name>
        <dbReference type="ChEBI" id="CHEBI:29105"/>
        <label>1</label>
    </ligand>
</feature>
<feature type="binding site" evidence="1">
    <location>
        <position position="115"/>
    </location>
    <ligand>
        <name>Zn(2+)</name>
        <dbReference type="ChEBI" id="CHEBI:29105"/>
        <label>1</label>
    </ligand>
</feature>
<feature type="binding site" evidence="1">
    <location>
        <position position="153"/>
    </location>
    <ligand>
        <name>Zn(2+)</name>
        <dbReference type="ChEBI" id="CHEBI:29105"/>
        <label>1</label>
    </ligand>
</feature>
<feature type="binding site" evidence="1">
    <location>
        <position position="153"/>
    </location>
    <ligand>
        <name>Zn(2+)</name>
        <dbReference type="ChEBI" id="CHEBI:29105"/>
        <label>2</label>
    </ligand>
</feature>
<feature type="binding site" evidence="1">
    <location>
        <position position="187"/>
    </location>
    <ligand>
        <name>Zn(2+)</name>
        <dbReference type="ChEBI" id="CHEBI:29105"/>
        <label>2</label>
    </ligand>
</feature>
<feature type="binding site" evidence="1">
    <location>
        <position position="190"/>
    </location>
    <ligand>
        <name>Zn(2+)</name>
        <dbReference type="ChEBI" id="CHEBI:29105"/>
        <label>3</label>
    </ligand>
</feature>
<feature type="binding site" evidence="1">
    <location>
        <position position="224"/>
    </location>
    <ligand>
        <name>Zn(2+)</name>
        <dbReference type="ChEBI" id="CHEBI:29105"/>
        <label>2</label>
    </ligand>
</feature>
<feature type="binding site" evidence="1">
    <location>
        <position position="237"/>
    </location>
    <ligand>
        <name>Zn(2+)</name>
        <dbReference type="ChEBI" id="CHEBI:29105"/>
        <label>3</label>
    </ligand>
</feature>
<feature type="binding site" evidence="1">
    <location>
        <position position="239"/>
    </location>
    <ligand>
        <name>Zn(2+)</name>
        <dbReference type="ChEBI" id="CHEBI:29105"/>
        <label>3</label>
    </ligand>
</feature>
<feature type="binding site" evidence="1">
    <location>
        <position position="269"/>
    </location>
    <ligand>
        <name>Zn(2+)</name>
        <dbReference type="ChEBI" id="CHEBI:29105"/>
        <label>2</label>
    </ligand>
</feature>
<sequence>MQVFPPPQVPLLGAHTSTSGGLQNAIYEGQEIGASTVQMFTANQRQWRRRPLTDDLINSFKTALEETSLSYIMSHAGYLINPGAPNPEILEKSRICIQQEIQDCLSLGITFVNFHPGAAVNDTKEACLDRIVSSFSLVEPLFEDSPPLVVLFETTAGQGTLVGSTFEELGYLIDKLKHKIPVGVCIDTCHIFASGYDITSPGSWKQVLKNFDDAIGLSYLRAFHLNDSMFPLGKHKDRHAPLGEGDIGMESFKFLMTDELTRMIPKYLETPGGPDLWTKEIRQLKSFQK</sequence>
<reference key="1">
    <citation type="journal article" date="2005" name="Genome Res.">
        <title>The Chlamydophila abortus genome sequence reveals an array of variable proteins that contribute to interspecies variation.</title>
        <authorList>
            <person name="Thomson N.R."/>
            <person name="Yeats C."/>
            <person name="Bell K."/>
            <person name="Holden M.T.G."/>
            <person name="Bentley S.D."/>
            <person name="Livingstone M."/>
            <person name="Cerdeno-Tarraga A.-M."/>
            <person name="Harris B."/>
            <person name="Doggett J."/>
            <person name="Ormond D."/>
            <person name="Mungall K."/>
            <person name="Clarke K."/>
            <person name="Feltwell T."/>
            <person name="Hance Z."/>
            <person name="Sanders M."/>
            <person name="Quail M.A."/>
            <person name="Price C."/>
            <person name="Barrell B.G."/>
            <person name="Parkhill J."/>
            <person name="Longbottom D."/>
        </authorList>
    </citation>
    <scope>NUCLEOTIDE SEQUENCE [LARGE SCALE GENOMIC DNA]</scope>
    <source>
        <strain>DSM 27085 / S26/3</strain>
    </source>
</reference>
<name>END4_CHLAB</name>
<organism>
    <name type="scientific">Chlamydia abortus (strain DSM 27085 / S26/3)</name>
    <name type="common">Chlamydophila abortus</name>
    <dbReference type="NCBI Taxonomy" id="218497"/>
    <lineage>
        <taxon>Bacteria</taxon>
        <taxon>Pseudomonadati</taxon>
        <taxon>Chlamydiota</taxon>
        <taxon>Chlamydiia</taxon>
        <taxon>Chlamydiales</taxon>
        <taxon>Chlamydiaceae</taxon>
        <taxon>Chlamydia/Chlamydophila group</taxon>
        <taxon>Chlamydia</taxon>
    </lineage>
</organism>
<gene>
    <name evidence="1" type="primary">nfo</name>
    <name type="ordered locus">CAB012</name>
</gene>
<accession>Q5L798</accession>